<proteinExistence type="inferred from homology"/>
<sequence>MSNHIDRDVINALIAGHFADPFSVLGMHRTDAGLEVRALLPDATDVWVIEPKTGRKVGKLECLDSRGFFSGVLPRRKNAFRYQLAVTWHGQQNLIDDPYRFGPLLQDLDVWLLSEGTHLRPYETLGAHAATMDGVTGTRFSVWAPNARRVSVVGQFNYWDGRRHPMRFRKESGIWELFVPGAHNGQLYKFELIDAHGNLRVKADPYAFESQMRPESASLICDLPPKVEQPADRRAANQFDAPISIYEVHLGSWRRHTDNNFWLSYRELADQLVPYAKWMGFTHLELLPVNEHPFDGSWGYQPTGLYAPTRRFGTRDDFRYFINAAHAAGLNVILDWVPGHFPADDFALASFDGTSLYEHSDPREGYHQDWNTLIYNYGRREVSNYLVGNALYWIERFGIDALRVDAVASMIYRDYSRKAGEWIPNEYGGRENLEAIEFLRNTNRILGEQTPGAVTMAEESTDFAGVTRPPAGGGLGFWFKWNLGWMHDTLDYMKLDPVHRRYHHDKMTFGMLYNYTENFVLPLSHDEVVHGKKSILDRMPGDAWQKFANLRAYYGWLFAFPGKKLLFMGNEFAQGREWNHDVSLDWHLLEGGDNWHHGVQRLVRDLNHTYRHHKALHELDFDPYGFEWLVVDDHERSVFVFVRRDRAGNEIIVASNFTPVPRHDYRFGINQPGRWREALNTDSMHYHGSNQGNGGVVESDAIASHGREHSLSLTLPPLATIWLVREAQ</sequence>
<dbReference type="EC" id="2.4.1.18" evidence="1"/>
<dbReference type="EMBL" id="CP000647">
    <property type="protein sequence ID" value="ABR79185.1"/>
    <property type="molecule type" value="Genomic_DNA"/>
</dbReference>
<dbReference type="RefSeq" id="WP_004150069.1">
    <property type="nucleotide sequence ID" value="NC_009648.1"/>
</dbReference>
<dbReference type="SMR" id="A6TF51"/>
<dbReference type="STRING" id="272620.KPN_03798"/>
<dbReference type="CAZy" id="CBM48">
    <property type="family name" value="Carbohydrate-Binding Module Family 48"/>
</dbReference>
<dbReference type="CAZy" id="GH13">
    <property type="family name" value="Glycoside Hydrolase Family 13"/>
</dbReference>
<dbReference type="jPOST" id="A6TF51"/>
<dbReference type="PaxDb" id="272620-KPN_03798"/>
<dbReference type="DNASU" id="5340121"/>
<dbReference type="EnsemblBacteria" id="ABR79185">
    <property type="protein sequence ID" value="ABR79185"/>
    <property type="gene ID" value="KPN_03798"/>
</dbReference>
<dbReference type="KEGG" id="kpn:KPN_03798"/>
<dbReference type="HOGENOM" id="CLU_004245_3_2_6"/>
<dbReference type="UniPathway" id="UPA00164"/>
<dbReference type="Proteomes" id="UP000000265">
    <property type="component" value="Chromosome"/>
</dbReference>
<dbReference type="GO" id="GO:0005829">
    <property type="term" value="C:cytosol"/>
    <property type="evidence" value="ECO:0007669"/>
    <property type="project" value="TreeGrafter"/>
</dbReference>
<dbReference type="GO" id="GO:0003844">
    <property type="term" value="F:1,4-alpha-glucan branching enzyme activity"/>
    <property type="evidence" value="ECO:0007669"/>
    <property type="project" value="UniProtKB-UniRule"/>
</dbReference>
<dbReference type="GO" id="GO:0043169">
    <property type="term" value="F:cation binding"/>
    <property type="evidence" value="ECO:0007669"/>
    <property type="project" value="InterPro"/>
</dbReference>
<dbReference type="GO" id="GO:0004553">
    <property type="term" value="F:hydrolase activity, hydrolyzing O-glycosyl compounds"/>
    <property type="evidence" value="ECO:0007669"/>
    <property type="project" value="InterPro"/>
</dbReference>
<dbReference type="GO" id="GO:0005978">
    <property type="term" value="P:glycogen biosynthetic process"/>
    <property type="evidence" value="ECO:0007669"/>
    <property type="project" value="UniProtKB-UniRule"/>
</dbReference>
<dbReference type="CDD" id="cd11322">
    <property type="entry name" value="AmyAc_Glg_BE"/>
    <property type="match status" value="1"/>
</dbReference>
<dbReference type="CDD" id="cd02855">
    <property type="entry name" value="E_set_GBE_prok_N"/>
    <property type="match status" value="1"/>
</dbReference>
<dbReference type="FunFam" id="2.60.40.10:FF:000169">
    <property type="entry name" value="1,4-alpha-glucan branching enzyme GlgB"/>
    <property type="match status" value="1"/>
</dbReference>
<dbReference type="FunFam" id="2.60.40.10:FF:000331">
    <property type="entry name" value="1,4-alpha-glucan branching enzyme GlgB"/>
    <property type="match status" value="1"/>
</dbReference>
<dbReference type="FunFam" id="2.60.40.1180:FF:000002">
    <property type="entry name" value="1,4-alpha-glucan branching enzyme GlgB"/>
    <property type="match status" value="1"/>
</dbReference>
<dbReference type="FunFam" id="3.20.20.80:FF:000003">
    <property type="entry name" value="1,4-alpha-glucan branching enzyme GlgB"/>
    <property type="match status" value="1"/>
</dbReference>
<dbReference type="Gene3D" id="3.20.20.80">
    <property type="entry name" value="Glycosidases"/>
    <property type="match status" value="1"/>
</dbReference>
<dbReference type="Gene3D" id="2.60.40.1180">
    <property type="entry name" value="Golgi alpha-mannosidase II"/>
    <property type="match status" value="1"/>
</dbReference>
<dbReference type="Gene3D" id="2.60.40.10">
    <property type="entry name" value="Immunoglobulins"/>
    <property type="match status" value="2"/>
</dbReference>
<dbReference type="HAMAP" id="MF_00685">
    <property type="entry name" value="GlgB"/>
    <property type="match status" value="1"/>
</dbReference>
<dbReference type="InterPro" id="IPR006048">
    <property type="entry name" value="A-amylase/branching_C"/>
</dbReference>
<dbReference type="InterPro" id="IPR037439">
    <property type="entry name" value="Branching_enzy"/>
</dbReference>
<dbReference type="InterPro" id="IPR006407">
    <property type="entry name" value="GlgB"/>
</dbReference>
<dbReference type="InterPro" id="IPR054169">
    <property type="entry name" value="GlgB_N"/>
</dbReference>
<dbReference type="InterPro" id="IPR044143">
    <property type="entry name" value="GlgB_N_E_set_prok"/>
</dbReference>
<dbReference type="InterPro" id="IPR006047">
    <property type="entry name" value="Glyco_hydro_13_cat_dom"/>
</dbReference>
<dbReference type="InterPro" id="IPR004193">
    <property type="entry name" value="Glyco_hydro_13_N"/>
</dbReference>
<dbReference type="InterPro" id="IPR013780">
    <property type="entry name" value="Glyco_hydro_b"/>
</dbReference>
<dbReference type="InterPro" id="IPR017853">
    <property type="entry name" value="Glycoside_hydrolase_SF"/>
</dbReference>
<dbReference type="InterPro" id="IPR013783">
    <property type="entry name" value="Ig-like_fold"/>
</dbReference>
<dbReference type="InterPro" id="IPR014756">
    <property type="entry name" value="Ig_E-set"/>
</dbReference>
<dbReference type="NCBIfam" id="TIGR01515">
    <property type="entry name" value="branching_enzym"/>
    <property type="match status" value="1"/>
</dbReference>
<dbReference type="NCBIfam" id="NF003811">
    <property type="entry name" value="PRK05402.1"/>
    <property type="match status" value="1"/>
</dbReference>
<dbReference type="NCBIfam" id="NF008967">
    <property type="entry name" value="PRK12313.1"/>
    <property type="match status" value="1"/>
</dbReference>
<dbReference type="PANTHER" id="PTHR43651">
    <property type="entry name" value="1,4-ALPHA-GLUCAN-BRANCHING ENZYME"/>
    <property type="match status" value="1"/>
</dbReference>
<dbReference type="PANTHER" id="PTHR43651:SF3">
    <property type="entry name" value="1,4-ALPHA-GLUCAN-BRANCHING ENZYME"/>
    <property type="match status" value="1"/>
</dbReference>
<dbReference type="Pfam" id="PF00128">
    <property type="entry name" value="Alpha-amylase"/>
    <property type="match status" value="1"/>
</dbReference>
<dbReference type="Pfam" id="PF02806">
    <property type="entry name" value="Alpha-amylase_C"/>
    <property type="match status" value="1"/>
</dbReference>
<dbReference type="Pfam" id="PF02922">
    <property type="entry name" value="CBM_48"/>
    <property type="match status" value="1"/>
</dbReference>
<dbReference type="Pfam" id="PF22019">
    <property type="entry name" value="GlgB_N"/>
    <property type="match status" value="1"/>
</dbReference>
<dbReference type="PIRSF" id="PIRSF000463">
    <property type="entry name" value="GlgB"/>
    <property type="match status" value="1"/>
</dbReference>
<dbReference type="SMART" id="SM00642">
    <property type="entry name" value="Aamy"/>
    <property type="match status" value="1"/>
</dbReference>
<dbReference type="SUPFAM" id="SSF51445">
    <property type="entry name" value="(Trans)glycosidases"/>
    <property type="match status" value="1"/>
</dbReference>
<dbReference type="SUPFAM" id="SSF81296">
    <property type="entry name" value="E set domains"/>
    <property type="match status" value="2"/>
</dbReference>
<dbReference type="SUPFAM" id="SSF51011">
    <property type="entry name" value="Glycosyl hydrolase domain"/>
    <property type="match status" value="1"/>
</dbReference>
<feature type="chain" id="PRO_1000044981" description="1,4-alpha-glucan branching enzyme GlgB">
    <location>
        <begin position="1"/>
        <end position="728"/>
    </location>
</feature>
<feature type="active site" description="Nucleophile" evidence="1">
    <location>
        <position position="405"/>
    </location>
</feature>
<feature type="active site" description="Proton donor" evidence="1">
    <location>
        <position position="458"/>
    </location>
</feature>
<comment type="function">
    <text evidence="1">Catalyzes the formation of the alpha-1,6-glucosidic linkages in glycogen by scission of a 1,4-alpha-linked oligosaccharide from growing alpha-1,4-glucan chains and the subsequent attachment of the oligosaccharide to the alpha-1,6 position.</text>
</comment>
<comment type="catalytic activity">
    <reaction evidence="1">
        <text>Transfers a segment of a (1-&gt;4)-alpha-D-glucan chain to a primary hydroxy group in a similar glucan chain.</text>
        <dbReference type="EC" id="2.4.1.18"/>
    </reaction>
</comment>
<comment type="pathway">
    <text evidence="1">Glycan biosynthesis; glycogen biosynthesis.</text>
</comment>
<comment type="subunit">
    <text evidence="1">Monomer.</text>
</comment>
<comment type="similarity">
    <text evidence="1">Belongs to the glycosyl hydrolase 13 family. GlgB subfamily.</text>
</comment>
<organism>
    <name type="scientific">Klebsiella pneumoniae subsp. pneumoniae (strain ATCC 700721 / MGH 78578)</name>
    <dbReference type="NCBI Taxonomy" id="272620"/>
    <lineage>
        <taxon>Bacteria</taxon>
        <taxon>Pseudomonadati</taxon>
        <taxon>Pseudomonadota</taxon>
        <taxon>Gammaproteobacteria</taxon>
        <taxon>Enterobacterales</taxon>
        <taxon>Enterobacteriaceae</taxon>
        <taxon>Klebsiella/Raoultella group</taxon>
        <taxon>Klebsiella</taxon>
        <taxon>Klebsiella pneumoniae complex</taxon>
    </lineage>
</organism>
<name>GLGB_KLEP7</name>
<protein>
    <recommendedName>
        <fullName evidence="1">1,4-alpha-glucan branching enzyme GlgB</fullName>
        <ecNumber evidence="1">2.4.1.18</ecNumber>
    </recommendedName>
    <alternativeName>
        <fullName evidence="1">1,4-alpha-D-glucan:1,4-alpha-D-glucan 6-glucosyl-transferase</fullName>
    </alternativeName>
    <alternativeName>
        <fullName evidence="1">Alpha-(1-&gt;4)-glucan branching enzyme</fullName>
    </alternativeName>
    <alternativeName>
        <fullName evidence="1">Glycogen branching enzyme</fullName>
        <shortName evidence="1">BE</shortName>
    </alternativeName>
</protein>
<accession>A6TF51</accession>
<evidence type="ECO:0000255" key="1">
    <source>
        <dbReference type="HAMAP-Rule" id="MF_00685"/>
    </source>
</evidence>
<reference key="1">
    <citation type="submission" date="2006-09" db="EMBL/GenBank/DDBJ databases">
        <authorList>
            <consortium name="The Klebsiella pneumonia Genome Sequencing Project"/>
            <person name="McClelland M."/>
            <person name="Sanderson E.K."/>
            <person name="Spieth J."/>
            <person name="Clifton W.S."/>
            <person name="Latreille P."/>
            <person name="Sabo A."/>
            <person name="Pepin K."/>
            <person name="Bhonagiri V."/>
            <person name="Porwollik S."/>
            <person name="Ali J."/>
            <person name="Wilson R.K."/>
        </authorList>
    </citation>
    <scope>NUCLEOTIDE SEQUENCE [LARGE SCALE GENOMIC DNA]</scope>
    <source>
        <strain>ATCC 700721 / MGH 78578</strain>
    </source>
</reference>
<keyword id="KW-0119">Carbohydrate metabolism</keyword>
<keyword id="KW-0320">Glycogen biosynthesis</keyword>
<keyword id="KW-0321">Glycogen metabolism</keyword>
<keyword id="KW-0328">Glycosyltransferase</keyword>
<keyword id="KW-0808">Transferase</keyword>
<gene>
    <name evidence="1" type="primary">glgB</name>
    <name type="ordered locus">KPN78578_37610</name>
    <name type="ORF">KPN_03798</name>
</gene>